<accession>A7I3Q0</accession>
<comment type="function">
    <text evidence="1">Peptide chain release factor 1 directs the termination of translation in response to the peptide chain termination codons UAG and UAA.</text>
</comment>
<comment type="subcellular location">
    <subcellularLocation>
        <location evidence="1">Cytoplasm</location>
    </subcellularLocation>
</comment>
<comment type="PTM">
    <text evidence="1">Methylated by PrmC. Methylation increases the termination efficiency of RF1.</text>
</comment>
<comment type="similarity">
    <text evidence="1">Belongs to the prokaryotic/mitochondrial release factor family.</text>
</comment>
<keyword id="KW-0963">Cytoplasm</keyword>
<keyword id="KW-0488">Methylation</keyword>
<keyword id="KW-0648">Protein biosynthesis</keyword>
<keyword id="KW-1185">Reference proteome</keyword>
<organism>
    <name type="scientific">Campylobacter hominis (strain ATCC BAA-381 / DSM 21671 / CCUG 45161 / LMG 19568 / NCTC 13146 / CH001A)</name>
    <dbReference type="NCBI Taxonomy" id="360107"/>
    <lineage>
        <taxon>Bacteria</taxon>
        <taxon>Pseudomonadati</taxon>
        <taxon>Campylobacterota</taxon>
        <taxon>Epsilonproteobacteria</taxon>
        <taxon>Campylobacterales</taxon>
        <taxon>Campylobacteraceae</taxon>
        <taxon>Campylobacter</taxon>
    </lineage>
</organism>
<name>RF1_CAMHC</name>
<dbReference type="EMBL" id="CP000776">
    <property type="protein sequence ID" value="ABS52123.1"/>
    <property type="molecule type" value="Genomic_DNA"/>
</dbReference>
<dbReference type="RefSeq" id="WP_012109446.1">
    <property type="nucleotide sequence ID" value="NC_009714.1"/>
</dbReference>
<dbReference type="SMR" id="A7I3Q0"/>
<dbReference type="STRING" id="360107.CHAB381_1618"/>
<dbReference type="KEGG" id="cha:CHAB381_1618"/>
<dbReference type="eggNOG" id="COG0216">
    <property type="taxonomic scope" value="Bacteria"/>
</dbReference>
<dbReference type="HOGENOM" id="CLU_036856_0_1_7"/>
<dbReference type="OrthoDB" id="9806673at2"/>
<dbReference type="Proteomes" id="UP000002407">
    <property type="component" value="Chromosome"/>
</dbReference>
<dbReference type="GO" id="GO:0005737">
    <property type="term" value="C:cytoplasm"/>
    <property type="evidence" value="ECO:0007669"/>
    <property type="project" value="UniProtKB-SubCell"/>
</dbReference>
<dbReference type="GO" id="GO:0016149">
    <property type="term" value="F:translation release factor activity, codon specific"/>
    <property type="evidence" value="ECO:0007669"/>
    <property type="project" value="UniProtKB-UniRule"/>
</dbReference>
<dbReference type="FunFam" id="3.30.160.20:FF:000004">
    <property type="entry name" value="Peptide chain release factor 1"/>
    <property type="match status" value="1"/>
</dbReference>
<dbReference type="FunFam" id="3.30.70.1660:FF:000002">
    <property type="entry name" value="Peptide chain release factor 1"/>
    <property type="match status" value="1"/>
</dbReference>
<dbReference type="FunFam" id="3.30.70.1660:FF:000004">
    <property type="entry name" value="Peptide chain release factor 1"/>
    <property type="match status" value="1"/>
</dbReference>
<dbReference type="Gene3D" id="3.30.160.20">
    <property type="match status" value="1"/>
</dbReference>
<dbReference type="Gene3D" id="3.30.70.1660">
    <property type="match status" value="1"/>
</dbReference>
<dbReference type="Gene3D" id="6.10.140.1950">
    <property type="match status" value="1"/>
</dbReference>
<dbReference type="HAMAP" id="MF_00093">
    <property type="entry name" value="Rel_fac_1"/>
    <property type="match status" value="1"/>
</dbReference>
<dbReference type="InterPro" id="IPR005139">
    <property type="entry name" value="PCRF"/>
</dbReference>
<dbReference type="InterPro" id="IPR000352">
    <property type="entry name" value="Pep_chain_release_fac_I"/>
</dbReference>
<dbReference type="InterPro" id="IPR045853">
    <property type="entry name" value="Pep_chain_release_fac_I_sf"/>
</dbReference>
<dbReference type="InterPro" id="IPR050057">
    <property type="entry name" value="Prokaryotic/Mito_RF"/>
</dbReference>
<dbReference type="InterPro" id="IPR004373">
    <property type="entry name" value="RF-1"/>
</dbReference>
<dbReference type="NCBIfam" id="TIGR00019">
    <property type="entry name" value="prfA"/>
    <property type="match status" value="1"/>
</dbReference>
<dbReference type="NCBIfam" id="NF001859">
    <property type="entry name" value="PRK00591.1"/>
    <property type="match status" value="1"/>
</dbReference>
<dbReference type="PANTHER" id="PTHR43804">
    <property type="entry name" value="LD18447P"/>
    <property type="match status" value="1"/>
</dbReference>
<dbReference type="PANTHER" id="PTHR43804:SF7">
    <property type="entry name" value="LD18447P"/>
    <property type="match status" value="1"/>
</dbReference>
<dbReference type="Pfam" id="PF03462">
    <property type="entry name" value="PCRF"/>
    <property type="match status" value="1"/>
</dbReference>
<dbReference type="Pfam" id="PF00472">
    <property type="entry name" value="RF-1"/>
    <property type="match status" value="1"/>
</dbReference>
<dbReference type="SMART" id="SM00937">
    <property type="entry name" value="PCRF"/>
    <property type="match status" value="1"/>
</dbReference>
<dbReference type="SUPFAM" id="SSF75620">
    <property type="entry name" value="Release factor"/>
    <property type="match status" value="1"/>
</dbReference>
<dbReference type="PROSITE" id="PS00745">
    <property type="entry name" value="RF_PROK_I"/>
    <property type="match status" value="1"/>
</dbReference>
<evidence type="ECO:0000255" key="1">
    <source>
        <dbReference type="HAMAP-Rule" id="MF_00093"/>
    </source>
</evidence>
<evidence type="ECO:0000256" key="2">
    <source>
        <dbReference type="SAM" id="MobiDB-lite"/>
    </source>
</evidence>
<protein>
    <recommendedName>
        <fullName evidence="1">Peptide chain release factor 1</fullName>
        <shortName evidence="1">RF-1</shortName>
    </recommendedName>
</protein>
<feature type="chain" id="PRO_1000004874" description="Peptide chain release factor 1">
    <location>
        <begin position="1"/>
        <end position="355"/>
    </location>
</feature>
<feature type="region of interest" description="Disordered" evidence="2">
    <location>
        <begin position="280"/>
        <end position="307"/>
    </location>
</feature>
<feature type="compositionally biased region" description="Basic and acidic residues" evidence="2">
    <location>
        <begin position="280"/>
        <end position="293"/>
    </location>
</feature>
<feature type="modified residue" description="N5-methylglutamine" evidence="1">
    <location>
        <position position="231"/>
    </location>
</feature>
<gene>
    <name evidence="1" type="primary">prfA</name>
    <name type="ordered locus">CHAB381_1618</name>
</gene>
<proteinExistence type="inferred from homology"/>
<sequence>MLADRLKPFLKRYDEISESLSDPKILSDISLVTKLSKEQRSIEPVRNATLQYLEVLKNIEDNKSLINDTELGDLAKEELKNLEISQNKLEEEIKILLIPKDPNDEKNIFLEIRAGTGGDEAALFAGDLLDAYLRYAELRGYKTEIVSQSEGSAGGFKEVILLVKGDGAYSRLKFEGGTHRVQRVPETESQGRVHTSAITVAIMPEIEDSEIQINENDLRIDVMRASGHGGQCVNTTDSAVRITHIPTGLVVTNQDGKSQHKNKEAAMKVLKARLYDLQEKERKAKEQSERKDQVGTGDRSGRIRTYNYPQNRITDHRINLTLYRLDAIMAGGLFDEIIDPLIAHAQAEAINKSEI</sequence>
<reference key="1">
    <citation type="submission" date="2007-07" db="EMBL/GenBank/DDBJ databases">
        <title>Complete genome sequence of Campylobacter hominis ATCC BAA-381, a commensal isolated from the human gastrointestinal tract.</title>
        <authorList>
            <person name="Fouts D.E."/>
            <person name="Mongodin E.F."/>
            <person name="Puiu D."/>
            <person name="Sebastian Y."/>
            <person name="Miller W.G."/>
            <person name="Mandrell R.E."/>
            <person name="Nelson K.E."/>
        </authorList>
    </citation>
    <scope>NUCLEOTIDE SEQUENCE [LARGE SCALE GENOMIC DNA]</scope>
    <source>
        <strain>ATCC BAA-381 / DSM 21671 / CCUG 45161 / LMG 19568 / NCTC 13146 / CH001A</strain>
    </source>
</reference>